<protein>
    <recommendedName>
        <fullName evidence="4">Adipokinetic hormone</fullName>
        <shortName evidence="4">AKH</shortName>
    </recommendedName>
</protein>
<proteinExistence type="evidence at protein level"/>
<accession>B0M2U5</accession>
<comment type="function">
    <text evidence="1">This hormone, released from cells in the corpora cardiaca, causes release of diglycerides from the fat body and stimulation of muscles to use these diglycerides as an energy source during energy-demanding processes.</text>
</comment>
<comment type="subcellular location">
    <subcellularLocation>
        <location evidence="6">Secreted</location>
    </subcellularLocation>
</comment>
<comment type="similarity">
    <text evidence="2">Belongs to the AKH/HRTH/RPCH family.</text>
</comment>
<keyword id="KW-0027">Amidation</keyword>
<keyword id="KW-0903">Direct protein sequencing</keyword>
<keyword id="KW-0286">Flight</keyword>
<keyword id="KW-0372">Hormone</keyword>
<keyword id="KW-0527">Neuropeptide</keyword>
<keyword id="KW-0873">Pyrrolidone carboxylic acid</keyword>
<keyword id="KW-0964">Secreted</keyword>
<feature type="peptide" id="PRO_0000420514" description="Adipokinetic hormone" evidence="3">
    <location>
        <begin position="1"/>
        <end position="8"/>
    </location>
</feature>
<feature type="modified residue" description="Pyrrolidone carboxylic acid" evidence="3">
    <location>
        <position position="1"/>
    </location>
</feature>
<feature type="modified residue" description="Tryptophan amide" evidence="3">
    <location>
        <position position="8"/>
    </location>
</feature>
<evidence type="ECO:0000250" key="1"/>
<evidence type="ECO:0000255" key="2"/>
<evidence type="ECO:0000269" key="3">
    <source>
    </source>
</evidence>
<evidence type="ECO:0000303" key="4">
    <source>
    </source>
</evidence>
<evidence type="ECO:0000305" key="5"/>
<evidence type="ECO:0000305" key="6">
    <source>
    </source>
</evidence>
<reference evidence="5" key="1">
    <citation type="journal article" date="2012" name="Syst. Biol.">
        <title>Peptidomics-based phylogeny and biogeography of Mantophasmatodea (Hexapoda).</title>
        <authorList>
            <person name="Predel R."/>
            <person name="Neupert S."/>
            <person name="Huetteroth W."/>
            <person name="Kahnt J."/>
            <person name="Waidelich D."/>
            <person name="Roth S."/>
        </authorList>
    </citation>
    <scope>PROTEIN SEQUENCE</scope>
    <scope>PYROGLUTAMATE FORMATION AT GLN-1</scope>
    <scope>AMIDATION AT TRP-8</scope>
    <source>
        <tissue evidence="3">Corpora cardiaca</tissue>
    </source>
</reference>
<organism>
    <name type="scientific">Namaquaphasma ookiepense</name>
    <name type="common">Gladiator bug</name>
    <dbReference type="NCBI Taxonomy" id="409167"/>
    <lineage>
        <taxon>Eukaryota</taxon>
        <taxon>Metazoa</taxon>
        <taxon>Ecdysozoa</taxon>
        <taxon>Arthropoda</taxon>
        <taxon>Hexapoda</taxon>
        <taxon>Insecta</taxon>
        <taxon>Pterygota</taxon>
        <taxon>Neoptera</taxon>
        <taxon>Polyneoptera</taxon>
        <taxon>Mantophasmatodea</taxon>
        <taxon>Austrophasmatidae</taxon>
        <taxon>Namaquaphasma</taxon>
    </lineage>
</organism>
<name>AKH_NAMOO</name>
<sequence length="8" mass="948">QVNFTPGW</sequence>
<dbReference type="GO" id="GO:0005576">
    <property type="term" value="C:extracellular region"/>
    <property type="evidence" value="ECO:0007669"/>
    <property type="project" value="UniProtKB-SubCell"/>
</dbReference>
<dbReference type="GO" id="GO:0005179">
    <property type="term" value="F:hormone activity"/>
    <property type="evidence" value="ECO:0007669"/>
    <property type="project" value="UniProtKB-KW"/>
</dbReference>
<dbReference type="GO" id="GO:0007629">
    <property type="term" value="P:flight behavior"/>
    <property type="evidence" value="ECO:0007669"/>
    <property type="project" value="UniProtKB-KW"/>
</dbReference>
<dbReference type="GO" id="GO:0007218">
    <property type="term" value="P:neuropeptide signaling pathway"/>
    <property type="evidence" value="ECO:0007669"/>
    <property type="project" value="UniProtKB-KW"/>
</dbReference>
<dbReference type="InterPro" id="IPR002047">
    <property type="entry name" value="Adipokinetic_hormone_CS"/>
</dbReference>
<dbReference type="PROSITE" id="PS00256">
    <property type="entry name" value="AKH"/>
    <property type="match status" value="1"/>
</dbReference>